<protein>
    <recommendedName>
        <fullName evidence="1">Chaperone protein DnaK</fullName>
    </recommendedName>
    <alternativeName>
        <fullName evidence="1">HSP70</fullName>
    </alternativeName>
    <alternativeName>
        <fullName evidence="1">Heat shock 70 kDa protein</fullName>
    </alternativeName>
    <alternativeName>
        <fullName evidence="1">Heat shock protein 70</fullName>
    </alternativeName>
</protein>
<dbReference type="EMBL" id="CP000027">
    <property type="protein sequence ID" value="AAW39351.1"/>
    <property type="molecule type" value="Genomic_DNA"/>
</dbReference>
<dbReference type="RefSeq" id="WP_010937085.1">
    <property type="nucleotide sequence ID" value="NC_002936.3"/>
</dbReference>
<dbReference type="SMR" id="Q3Z6P1"/>
<dbReference type="FunCoup" id="Q3Z6P1">
    <property type="interactions" value="332"/>
</dbReference>
<dbReference type="STRING" id="243164.DET1399"/>
<dbReference type="GeneID" id="3229310"/>
<dbReference type="KEGG" id="det:DET1399"/>
<dbReference type="PATRIC" id="fig|243164.10.peg.1326"/>
<dbReference type="eggNOG" id="COG0443">
    <property type="taxonomic scope" value="Bacteria"/>
</dbReference>
<dbReference type="HOGENOM" id="CLU_005965_2_1_0"/>
<dbReference type="InParanoid" id="Q3Z6P1"/>
<dbReference type="Proteomes" id="UP000008289">
    <property type="component" value="Chromosome"/>
</dbReference>
<dbReference type="GO" id="GO:0005524">
    <property type="term" value="F:ATP binding"/>
    <property type="evidence" value="ECO:0007669"/>
    <property type="project" value="UniProtKB-UniRule"/>
</dbReference>
<dbReference type="GO" id="GO:0140662">
    <property type="term" value="F:ATP-dependent protein folding chaperone"/>
    <property type="evidence" value="ECO:0007669"/>
    <property type="project" value="InterPro"/>
</dbReference>
<dbReference type="GO" id="GO:0051082">
    <property type="term" value="F:unfolded protein binding"/>
    <property type="evidence" value="ECO:0007669"/>
    <property type="project" value="InterPro"/>
</dbReference>
<dbReference type="CDD" id="cd10234">
    <property type="entry name" value="ASKHA_NBD_HSP70_DnaK-like"/>
    <property type="match status" value="1"/>
</dbReference>
<dbReference type="FunFam" id="2.60.34.10:FF:000014">
    <property type="entry name" value="Chaperone protein DnaK HSP70"/>
    <property type="match status" value="1"/>
</dbReference>
<dbReference type="FunFam" id="1.20.1270.10:FF:000001">
    <property type="entry name" value="Molecular chaperone DnaK"/>
    <property type="match status" value="1"/>
</dbReference>
<dbReference type="FunFam" id="3.30.420.40:FF:000004">
    <property type="entry name" value="Molecular chaperone DnaK"/>
    <property type="match status" value="1"/>
</dbReference>
<dbReference type="FunFam" id="3.90.640.10:FF:000003">
    <property type="entry name" value="Molecular chaperone DnaK"/>
    <property type="match status" value="1"/>
</dbReference>
<dbReference type="Gene3D" id="1.20.1270.10">
    <property type="match status" value="1"/>
</dbReference>
<dbReference type="Gene3D" id="3.30.420.40">
    <property type="match status" value="2"/>
</dbReference>
<dbReference type="Gene3D" id="3.90.640.10">
    <property type="entry name" value="Actin, Chain A, domain 4"/>
    <property type="match status" value="1"/>
</dbReference>
<dbReference type="Gene3D" id="2.60.34.10">
    <property type="entry name" value="Substrate Binding Domain Of DNAk, Chain A, domain 1"/>
    <property type="match status" value="1"/>
</dbReference>
<dbReference type="HAMAP" id="MF_00332">
    <property type="entry name" value="DnaK"/>
    <property type="match status" value="1"/>
</dbReference>
<dbReference type="InterPro" id="IPR043129">
    <property type="entry name" value="ATPase_NBD"/>
</dbReference>
<dbReference type="InterPro" id="IPR012725">
    <property type="entry name" value="Chaperone_DnaK"/>
</dbReference>
<dbReference type="InterPro" id="IPR018181">
    <property type="entry name" value="Heat_shock_70_CS"/>
</dbReference>
<dbReference type="InterPro" id="IPR029048">
    <property type="entry name" value="HSP70_C_sf"/>
</dbReference>
<dbReference type="InterPro" id="IPR029047">
    <property type="entry name" value="HSP70_peptide-bd_sf"/>
</dbReference>
<dbReference type="InterPro" id="IPR013126">
    <property type="entry name" value="Hsp_70_fam"/>
</dbReference>
<dbReference type="NCBIfam" id="NF001413">
    <property type="entry name" value="PRK00290.1"/>
    <property type="match status" value="1"/>
</dbReference>
<dbReference type="NCBIfam" id="NF003520">
    <property type="entry name" value="PRK05183.1"/>
    <property type="match status" value="1"/>
</dbReference>
<dbReference type="NCBIfam" id="TIGR02350">
    <property type="entry name" value="prok_dnaK"/>
    <property type="match status" value="1"/>
</dbReference>
<dbReference type="PANTHER" id="PTHR19375">
    <property type="entry name" value="HEAT SHOCK PROTEIN 70KDA"/>
    <property type="match status" value="1"/>
</dbReference>
<dbReference type="Pfam" id="PF00012">
    <property type="entry name" value="HSP70"/>
    <property type="match status" value="1"/>
</dbReference>
<dbReference type="PRINTS" id="PR00301">
    <property type="entry name" value="HEATSHOCK70"/>
</dbReference>
<dbReference type="SUPFAM" id="SSF53067">
    <property type="entry name" value="Actin-like ATPase domain"/>
    <property type="match status" value="2"/>
</dbReference>
<dbReference type="SUPFAM" id="SSF100934">
    <property type="entry name" value="Heat shock protein 70kD (HSP70), C-terminal subdomain"/>
    <property type="match status" value="1"/>
</dbReference>
<dbReference type="SUPFAM" id="SSF100920">
    <property type="entry name" value="Heat shock protein 70kD (HSP70), peptide-binding domain"/>
    <property type="match status" value="1"/>
</dbReference>
<dbReference type="PROSITE" id="PS00297">
    <property type="entry name" value="HSP70_1"/>
    <property type="match status" value="1"/>
</dbReference>
<dbReference type="PROSITE" id="PS00329">
    <property type="entry name" value="HSP70_2"/>
    <property type="match status" value="1"/>
</dbReference>
<dbReference type="PROSITE" id="PS01036">
    <property type="entry name" value="HSP70_3"/>
    <property type="match status" value="1"/>
</dbReference>
<sequence length="637" mass="68530">MAKVVGIDLGTTNSEVAVMQGGEPVVIPSAEGSTLIPSVVAVNKNGERIVGRQAKNQAILNPENTVYSIKRFMGRKWGEPAGRELPVEADAKRKPYKVIQGNNNEVRVVMGDKDFSPPEVSAMILQKLKSDAEAYLGEKVTEAVITVPAYFNDAQRQATKDAGAIAGLKVLRIINEPTAAALAYGLDKKKDETIAVYDLGGGTFDISILELGEGTFQVKSTAGDTHLGGDDFDQKIIDWLIAEYKKDQGIDLSKDKTALQRLKEAAEKAKIELSTVQQAEINLPFITADASGPKHLNIILTRAKLEQMVMDLVDKSLEPCRQALKDSGKTASEINEVILVGGQTRMPLVQQKVKEFFGKEPNKGVNPDEVVAIGAAIQAGVLKGEVSDVLLLDVIPLTLGIETLGGVSTALITRNTTIPTSKSQVFSTAADNQPSVEIHVLQGERPMAADNRTLGRFMLDGILPAPRGVPQIEVTFDIDANGILSVKAKDKGTGREQKITITASSGLSKEEVEKMTREAEAHAAEDSKRKEEIEARNVADNLAYNAEKTLRDNKDKIPAELNTELESKIAAVRTALQGTDVDAIKTTTQELSTALQSVGSAVYGQQQEQGAPAQEEPSAEGKKNDDEGTVEGEFREV</sequence>
<comment type="function">
    <text evidence="1">Acts as a chaperone.</text>
</comment>
<comment type="induction">
    <text evidence="1">By stress conditions e.g. heat shock.</text>
</comment>
<comment type="similarity">
    <text evidence="1">Belongs to the heat shock protein 70 family.</text>
</comment>
<proteinExistence type="inferred from homology"/>
<evidence type="ECO:0000255" key="1">
    <source>
        <dbReference type="HAMAP-Rule" id="MF_00332"/>
    </source>
</evidence>
<evidence type="ECO:0000256" key="2">
    <source>
        <dbReference type="SAM" id="MobiDB-lite"/>
    </source>
</evidence>
<name>DNAK_DEHM1</name>
<feature type="chain" id="PRO_0000225956" description="Chaperone protein DnaK">
    <location>
        <begin position="1"/>
        <end position="637"/>
    </location>
</feature>
<feature type="region of interest" description="Disordered" evidence="2">
    <location>
        <begin position="600"/>
        <end position="637"/>
    </location>
</feature>
<feature type="compositionally biased region" description="Low complexity" evidence="2">
    <location>
        <begin position="604"/>
        <end position="616"/>
    </location>
</feature>
<feature type="compositionally biased region" description="Basic and acidic residues" evidence="2">
    <location>
        <begin position="619"/>
        <end position="637"/>
    </location>
</feature>
<feature type="modified residue" description="Phosphothreonine; by autocatalysis" evidence="1">
    <location>
        <position position="203"/>
    </location>
</feature>
<organism>
    <name type="scientific">Dehalococcoides mccartyi (strain ATCC BAA-2266 / KCTC 15142 / 195)</name>
    <name type="common">Dehalococcoides ethenogenes (strain 195)</name>
    <dbReference type="NCBI Taxonomy" id="243164"/>
    <lineage>
        <taxon>Bacteria</taxon>
        <taxon>Bacillati</taxon>
        <taxon>Chloroflexota</taxon>
        <taxon>Dehalococcoidia</taxon>
        <taxon>Dehalococcoidales</taxon>
        <taxon>Dehalococcoidaceae</taxon>
        <taxon>Dehalococcoides</taxon>
    </lineage>
</organism>
<accession>Q3Z6P1</accession>
<keyword id="KW-0067">ATP-binding</keyword>
<keyword id="KW-0143">Chaperone</keyword>
<keyword id="KW-0547">Nucleotide-binding</keyword>
<keyword id="KW-0597">Phosphoprotein</keyword>
<keyword id="KW-0346">Stress response</keyword>
<gene>
    <name evidence="1" type="primary">dnaK</name>
    <name type="ordered locus">DET1399</name>
</gene>
<reference key="1">
    <citation type="journal article" date="2005" name="Science">
        <title>Genome sequence of the PCE-dechlorinating bacterium Dehalococcoides ethenogenes.</title>
        <authorList>
            <person name="Seshadri R."/>
            <person name="Adrian L."/>
            <person name="Fouts D.E."/>
            <person name="Eisen J.A."/>
            <person name="Phillippy A.M."/>
            <person name="Methe B.A."/>
            <person name="Ward N.L."/>
            <person name="Nelson W.C."/>
            <person name="DeBoy R.T."/>
            <person name="Khouri H.M."/>
            <person name="Kolonay J.F."/>
            <person name="Dodson R.J."/>
            <person name="Daugherty S.C."/>
            <person name="Brinkac L.M."/>
            <person name="Sullivan S.A."/>
            <person name="Madupu R."/>
            <person name="Nelson K.E."/>
            <person name="Kang K.H."/>
            <person name="Impraim M."/>
            <person name="Tran K."/>
            <person name="Robinson J.M."/>
            <person name="Forberger H.A."/>
            <person name="Fraser C.M."/>
            <person name="Zinder S.H."/>
            <person name="Heidelberg J.F."/>
        </authorList>
    </citation>
    <scope>NUCLEOTIDE SEQUENCE [LARGE SCALE GENOMIC DNA]</scope>
    <source>
        <strain>ATCC BAA-2266 / KCTC 15142 / 195</strain>
    </source>
</reference>